<gene>
    <name type="primary">mes1</name>
    <name type="ORF">SPAC5D6.08c</name>
</gene>
<evidence type="ECO:0000256" key="1">
    <source>
        <dbReference type="SAM" id="MobiDB-lite"/>
    </source>
</evidence>
<evidence type="ECO:0000269" key="2">
    <source>
    </source>
</evidence>
<evidence type="ECO:0000269" key="3">
    <source>
    </source>
</evidence>
<evidence type="ECO:0000269" key="4">
    <source>
    </source>
</evidence>
<sequence length="101" mass="11318">MVNTDNKENEPPNMEKAHMDSSNALYRVQRPLQRRPLQELSIELVKPSQTITVKKSKKSTNSSSYFAQLHAASGQNPPPSVHSSHKQPSKARSPNPLLSMR</sequence>
<accession>P41005</accession>
<comment type="function">
    <text evidence="2 3">Specifically required for meiosis II (MII). Binds to slp1, an activator of the anapahase promoting complex/cyclcosome (APC/C), and counteracts its function in promoting proteolysis of cdc13. By suppressing the degradation of cdc13 at anaphase I this protein may help maintain a sufficient level of cdc2 kinase activity to complete MII.</text>
</comment>
<comment type="subunit">
    <text evidence="2">Interacts with slp1.</text>
</comment>
<comment type="interaction">
    <interactant intactId="EBI-1553555">
        <id>P41005</id>
    </interactant>
    <interactant intactId="EBI-1252744">
        <id>P78972</id>
        <label>slp1</label>
    </interactant>
    <organismsDiffer>false</organismsDiffer>
    <experiments>2</experiments>
</comment>
<comment type="subcellular location">
    <subcellularLocation>
        <location evidence="4">Cytoplasm</location>
    </subcellularLocation>
    <subcellularLocation>
        <location evidence="4">Nucleus</location>
    </subcellularLocation>
</comment>
<comment type="induction">
    <text>Preferentially expressed under nitrogen starvation conditions.</text>
</comment>
<comment type="miscellaneous">
    <text>Expression of the full-length mes1 protein requires the presence of the mei2 protein.</text>
</comment>
<organism>
    <name type="scientific">Schizosaccharomyces pombe (strain 972 / ATCC 24843)</name>
    <name type="common">Fission yeast</name>
    <dbReference type="NCBI Taxonomy" id="284812"/>
    <lineage>
        <taxon>Eukaryota</taxon>
        <taxon>Fungi</taxon>
        <taxon>Dikarya</taxon>
        <taxon>Ascomycota</taxon>
        <taxon>Taphrinomycotina</taxon>
        <taxon>Schizosaccharomycetes</taxon>
        <taxon>Schizosaccharomycetales</taxon>
        <taxon>Schizosaccharomycetaceae</taxon>
        <taxon>Schizosaccharomyces</taxon>
    </lineage>
</organism>
<protein>
    <recommendedName>
        <fullName>Protein mes1</fullName>
    </recommendedName>
</protein>
<feature type="chain" id="PRO_0000096438" description="Protein mes1">
    <location>
        <begin position="1"/>
        <end position="101"/>
    </location>
</feature>
<feature type="region of interest" description="Disordered" evidence="1">
    <location>
        <begin position="1"/>
        <end position="101"/>
    </location>
</feature>
<feature type="compositionally biased region" description="Basic and acidic residues" evidence="1">
    <location>
        <begin position="1"/>
        <end position="19"/>
    </location>
</feature>
<reference key="1">
    <citation type="journal article" date="1994" name="Curr. Genet.">
        <title>Meiosis-dependent mRNA splicing of the fission yeast Schizosaccharomyces pombe mes1+ gene.</title>
        <authorList>
            <person name="Kishida M."/>
            <person name="Nagai T."/>
            <person name="Nakaseko Y."/>
            <person name="Shimoda C."/>
        </authorList>
    </citation>
    <scope>NUCLEOTIDE SEQUENCE [GENOMIC DNA]</scope>
    <source>
        <strain>ATCC 38364 / 968</strain>
    </source>
</reference>
<reference key="2">
    <citation type="journal article" date="2002" name="Nature">
        <title>The genome sequence of Schizosaccharomyces pombe.</title>
        <authorList>
            <person name="Wood V."/>
            <person name="Gwilliam R."/>
            <person name="Rajandream M.A."/>
            <person name="Lyne M.H."/>
            <person name="Lyne R."/>
            <person name="Stewart A."/>
            <person name="Sgouros J.G."/>
            <person name="Peat N."/>
            <person name="Hayles J."/>
            <person name="Baker S.G."/>
            <person name="Basham D."/>
            <person name="Bowman S."/>
            <person name="Brooks K."/>
            <person name="Brown D."/>
            <person name="Brown S."/>
            <person name="Chillingworth T."/>
            <person name="Churcher C.M."/>
            <person name="Collins M."/>
            <person name="Connor R."/>
            <person name="Cronin A."/>
            <person name="Davis P."/>
            <person name="Feltwell T."/>
            <person name="Fraser A."/>
            <person name="Gentles S."/>
            <person name="Goble A."/>
            <person name="Hamlin N."/>
            <person name="Harris D.E."/>
            <person name="Hidalgo J."/>
            <person name="Hodgson G."/>
            <person name="Holroyd S."/>
            <person name="Hornsby T."/>
            <person name="Howarth S."/>
            <person name="Huckle E.J."/>
            <person name="Hunt S."/>
            <person name="Jagels K."/>
            <person name="James K.D."/>
            <person name="Jones L."/>
            <person name="Jones M."/>
            <person name="Leather S."/>
            <person name="McDonald S."/>
            <person name="McLean J."/>
            <person name="Mooney P."/>
            <person name="Moule S."/>
            <person name="Mungall K.L."/>
            <person name="Murphy L.D."/>
            <person name="Niblett D."/>
            <person name="Odell C."/>
            <person name="Oliver K."/>
            <person name="O'Neil S."/>
            <person name="Pearson D."/>
            <person name="Quail M.A."/>
            <person name="Rabbinowitsch E."/>
            <person name="Rutherford K.M."/>
            <person name="Rutter S."/>
            <person name="Saunders D."/>
            <person name="Seeger K."/>
            <person name="Sharp S."/>
            <person name="Skelton J."/>
            <person name="Simmonds M.N."/>
            <person name="Squares R."/>
            <person name="Squares S."/>
            <person name="Stevens K."/>
            <person name="Taylor K."/>
            <person name="Taylor R.G."/>
            <person name="Tivey A."/>
            <person name="Walsh S.V."/>
            <person name="Warren T."/>
            <person name="Whitehead S."/>
            <person name="Woodward J.R."/>
            <person name="Volckaert G."/>
            <person name="Aert R."/>
            <person name="Robben J."/>
            <person name="Grymonprez B."/>
            <person name="Weltjens I."/>
            <person name="Vanstreels E."/>
            <person name="Rieger M."/>
            <person name="Schaefer M."/>
            <person name="Mueller-Auer S."/>
            <person name="Gabel C."/>
            <person name="Fuchs M."/>
            <person name="Duesterhoeft A."/>
            <person name="Fritzc C."/>
            <person name="Holzer E."/>
            <person name="Moestl D."/>
            <person name="Hilbert H."/>
            <person name="Borzym K."/>
            <person name="Langer I."/>
            <person name="Beck A."/>
            <person name="Lehrach H."/>
            <person name="Reinhardt R."/>
            <person name="Pohl T.M."/>
            <person name="Eger P."/>
            <person name="Zimmermann W."/>
            <person name="Wedler H."/>
            <person name="Wambutt R."/>
            <person name="Purnelle B."/>
            <person name="Goffeau A."/>
            <person name="Cadieu E."/>
            <person name="Dreano S."/>
            <person name="Gloux S."/>
            <person name="Lelaure V."/>
            <person name="Mottier S."/>
            <person name="Galibert F."/>
            <person name="Aves S.J."/>
            <person name="Xiang Z."/>
            <person name="Hunt C."/>
            <person name="Moore K."/>
            <person name="Hurst S.M."/>
            <person name="Lucas M."/>
            <person name="Rochet M."/>
            <person name="Gaillardin C."/>
            <person name="Tallada V.A."/>
            <person name="Garzon A."/>
            <person name="Thode G."/>
            <person name="Daga R.R."/>
            <person name="Cruzado L."/>
            <person name="Jimenez J."/>
            <person name="Sanchez M."/>
            <person name="del Rey F."/>
            <person name="Benito J."/>
            <person name="Dominguez A."/>
            <person name="Revuelta J.L."/>
            <person name="Moreno S."/>
            <person name="Armstrong J."/>
            <person name="Forsburg S.L."/>
            <person name="Cerutti L."/>
            <person name="Lowe T."/>
            <person name="McCombie W.R."/>
            <person name="Paulsen I."/>
            <person name="Potashkin J."/>
            <person name="Shpakovski G.V."/>
            <person name="Ussery D."/>
            <person name="Barrell B.G."/>
            <person name="Nurse P."/>
        </authorList>
    </citation>
    <scope>NUCLEOTIDE SEQUENCE [LARGE SCALE GENOMIC DNA]</scope>
    <source>
        <strain>972 / ATCC 24843</strain>
    </source>
</reference>
<reference key="3">
    <citation type="journal article" date="2005" name="Curr. Biol.">
        <title>A large-scale screen in S. pombe identifies seven novel genes required for critical meiotic events.</title>
        <authorList>
            <person name="Martin-Castellanos C."/>
            <person name="Blanco M."/>
            <person name="Rozalen A.E."/>
            <person name="Perez-Hidalgo L."/>
            <person name="Garcia A.I."/>
            <person name="Conde F."/>
            <person name="Mata J."/>
            <person name="Ellermeier C."/>
            <person name="Davis L."/>
            <person name="San-Segundo P."/>
            <person name="Smith G.R."/>
            <person name="Moreno S."/>
        </authorList>
    </citation>
    <scope>FUNCTION</scope>
</reference>
<reference key="4">
    <citation type="journal article" date="2005" name="Nature">
        <title>Fission yeast Mes1p ensures the onset of meiosis II by blocking degradation of cyclin Cdc13p.</title>
        <authorList>
            <person name="Izawa D."/>
            <person name="Goto M."/>
            <person name="Yamashita A."/>
            <person name="Yamano H."/>
            <person name="Yamamoto M."/>
        </authorList>
    </citation>
    <scope>FUNCTION</scope>
    <scope>INTERACTION WITH SLP1</scope>
</reference>
<reference key="5">
    <citation type="journal article" date="2006" name="Nat. Biotechnol.">
        <title>ORFeome cloning and global analysis of protein localization in the fission yeast Schizosaccharomyces pombe.</title>
        <authorList>
            <person name="Matsuyama A."/>
            <person name="Arai R."/>
            <person name="Yashiroda Y."/>
            <person name="Shirai A."/>
            <person name="Kamata A."/>
            <person name="Sekido S."/>
            <person name="Kobayashi Y."/>
            <person name="Hashimoto A."/>
            <person name="Hamamoto M."/>
            <person name="Hiraoka Y."/>
            <person name="Horinouchi S."/>
            <person name="Yoshida M."/>
        </authorList>
    </citation>
    <scope>SUBCELLULAR LOCATION [LARGE SCALE ANALYSIS]</scope>
</reference>
<name>MES1_SCHPO</name>
<keyword id="KW-0963">Cytoplasm</keyword>
<keyword id="KW-0469">Meiosis</keyword>
<keyword id="KW-0539">Nucleus</keyword>
<keyword id="KW-1185">Reference proteome</keyword>
<dbReference type="EMBL" id="D25544">
    <property type="protein sequence ID" value="BAA05027.1"/>
    <property type="molecule type" value="Genomic_DNA"/>
</dbReference>
<dbReference type="EMBL" id="CU329670">
    <property type="protein sequence ID" value="CAB10856.1"/>
    <property type="molecule type" value="Genomic_DNA"/>
</dbReference>
<dbReference type="PIR" id="S44068">
    <property type="entry name" value="S44068"/>
</dbReference>
<dbReference type="RefSeq" id="NP_593361.1">
    <property type="nucleotide sequence ID" value="NM_001018793.2"/>
</dbReference>
<dbReference type="BioGRID" id="278351">
    <property type="interactions" value="8"/>
</dbReference>
<dbReference type="ELM" id="P41005"/>
<dbReference type="FunCoup" id="P41005">
    <property type="interactions" value="2"/>
</dbReference>
<dbReference type="IntAct" id="P41005">
    <property type="interactions" value="2"/>
</dbReference>
<dbReference type="STRING" id="284812.P41005"/>
<dbReference type="iPTMnet" id="P41005"/>
<dbReference type="PaxDb" id="4896-SPAC5D6.08c.1"/>
<dbReference type="EnsemblFungi" id="SPAC5D6.08c.1">
    <property type="protein sequence ID" value="SPAC5D6.08c.1:pep"/>
    <property type="gene ID" value="SPAC5D6.08c"/>
</dbReference>
<dbReference type="GeneID" id="2541861"/>
<dbReference type="KEGG" id="spo:2541861"/>
<dbReference type="PomBase" id="SPAC5D6.08c">
    <property type="gene designation" value="mes1"/>
</dbReference>
<dbReference type="VEuPathDB" id="FungiDB:SPAC5D6.08c"/>
<dbReference type="HOGENOM" id="CLU_2211473_0_0_1"/>
<dbReference type="InParanoid" id="P41005"/>
<dbReference type="OMA" id="GFHPYKI"/>
<dbReference type="PRO" id="PR:P41005"/>
<dbReference type="Proteomes" id="UP000002485">
    <property type="component" value="Chromosome I"/>
</dbReference>
<dbReference type="GO" id="GO:0005829">
    <property type="term" value="C:cytosol"/>
    <property type="evidence" value="ECO:0007005"/>
    <property type="project" value="PomBase"/>
</dbReference>
<dbReference type="GO" id="GO:0005634">
    <property type="term" value="C:nucleus"/>
    <property type="evidence" value="ECO:0007005"/>
    <property type="project" value="PomBase"/>
</dbReference>
<dbReference type="GO" id="GO:1990948">
    <property type="term" value="F:ubiquitin ligase inhibitor activity"/>
    <property type="evidence" value="ECO:0000314"/>
    <property type="project" value="PomBase"/>
</dbReference>
<dbReference type="GO" id="GO:1990946">
    <property type="term" value="P:meiosis I/meiosis II transition"/>
    <property type="evidence" value="ECO:0000315"/>
    <property type="project" value="PomBase"/>
</dbReference>
<dbReference type="GO" id="GO:1990949">
    <property type="term" value="P:metaphase/anaphase transition of meiosis I"/>
    <property type="evidence" value="ECO:0000315"/>
    <property type="project" value="PomBase"/>
</dbReference>
<dbReference type="GO" id="GO:1902103">
    <property type="term" value="P:negative regulation of metaphase/anaphase transition of meiotic cell cycle"/>
    <property type="evidence" value="ECO:0000315"/>
    <property type="project" value="PomBase"/>
</dbReference>
<proteinExistence type="evidence at protein level"/>